<proteinExistence type="inferred from homology"/>
<name>ITPA2_TRYCC</name>
<protein>
    <recommendedName>
        <fullName evidence="1">Inosine triphosphate pyrophosphatase 2</fullName>
        <shortName evidence="1">ITPase 2</shortName>
        <shortName evidence="1">Inosine triphosphatase 2</shortName>
        <ecNumber evidence="1">3.6.1.66</ecNumber>
    </recommendedName>
    <alternativeName>
        <fullName evidence="1">Non-canonical purine NTP pyrophosphatase 2</fullName>
    </alternativeName>
    <alternativeName>
        <fullName evidence="1">Non-standard purine NTP pyrophosphatase 2</fullName>
    </alternativeName>
    <alternativeName>
        <fullName evidence="1">Nucleoside-triphosphate diphosphatase 2</fullName>
    </alternativeName>
    <alternativeName>
        <fullName evidence="1">Nucleoside-triphosphate pyrophosphatase 2</fullName>
        <shortName evidence="1">NTPase 2</shortName>
    </alternativeName>
    <alternativeName>
        <fullName evidence="1">XTP/dITP diphosphatase 2</fullName>
    </alternativeName>
</protein>
<dbReference type="EC" id="3.6.1.66" evidence="1"/>
<dbReference type="EMBL" id="AAHK01000222">
    <property type="protein sequence ID" value="EAN95294.1"/>
    <property type="molecule type" value="Genomic_DNA"/>
</dbReference>
<dbReference type="RefSeq" id="XP_817145.1">
    <property type="nucleotide sequence ID" value="XM_812052.1"/>
</dbReference>
<dbReference type="SMR" id="Q4DRX4"/>
<dbReference type="FunCoup" id="Q4DRX4">
    <property type="interactions" value="603"/>
</dbReference>
<dbReference type="STRING" id="353153.Q4DRX4"/>
<dbReference type="PaxDb" id="353153-Q4DRX4"/>
<dbReference type="EnsemblProtists" id="EAN95294">
    <property type="protein sequence ID" value="EAN95294"/>
    <property type="gene ID" value="Tc00.1047053508307.184"/>
</dbReference>
<dbReference type="GeneID" id="3549132"/>
<dbReference type="KEGG" id="tcr:508307.184"/>
<dbReference type="eggNOG" id="KOG3222">
    <property type="taxonomic scope" value="Eukaryota"/>
</dbReference>
<dbReference type="InParanoid" id="Q4DRX4"/>
<dbReference type="OMA" id="YDPIFQP"/>
<dbReference type="Proteomes" id="UP000002296">
    <property type="component" value="Unassembled WGS sequence"/>
</dbReference>
<dbReference type="GO" id="GO:0005737">
    <property type="term" value="C:cytoplasm"/>
    <property type="evidence" value="ECO:0007669"/>
    <property type="project" value="UniProtKB-SubCell"/>
</dbReference>
<dbReference type="GO" id="GO:0035870">
    <property type="term" value="F:dITP diphosphatase activity"/>
    <property type="evidence" value="ECO:0007669"/>
    <property type="project" value="RHEA"/>
</dbReference>
<dbReference type="GO" id="GO:0036220">
    <property type="term" value="F:ITP diphosphatase activity"/>
    <property type="evidence" value="ECO:0007669"/>
    <property type="project" value="RHEA"/>
</dbReference>
<dbReference type="GO" id="GO:0046872">
    <property type="term" value="F:metal ion binding"/>
    <property type="evidence" value="ECO:0007669"/>
    <property type="project" value="UniProtKB-KW"/>
</dbReference>
<dbReference type="GO" id="GO:0000166">
    <property type="term" value="F:nucleotide binding"/>
    <property type="evidence" value="ECO:0007669"/>
    <property type="project" value="UniProtKB-KW"/>
</dbReference>
<dbReference type="GO" id="GO:0036222">
    <property type="term" value="F:XTP diphosphatase activity"/>
    <property type="evidence" value="ECO:0007669"/>
    <property type="project" value="RHEA"/>
</dbReference>
<dbReference type="GO" id="GO:0009204">
    <property type="term" value="P:deoxyribonucleoside triphosphate catabolic process"/>
    <property type="evidence" value="ECO:0007669"/>
    <property type="project" value="UniProtKB-UniRule"/>
</dbReference>
<dbReference type="GO" id="GO:0009117">
    <property type="term" value="P:nucleotide metabolic process"/>
    <property type="evidence" value="ECO:0007669"/>
    <property type="project" value="UniProtKB-KW"/>
</dbReference>
<dbReference type="CDD" id="cd00515">
    <property type="entry name" value="HAM1"/>
    <property type="match status" value="1"/>
</dbReference>
<dbReference type="FunFam" id="3.90.950.10:FF:000003">
    <property type="entry name" value="Inosine triphosphate pyrophosphatase"/>
    <property type="match status" value="1"/>
</dbReference>
<dbReference type="Gene3D" id="3.90.950.10">
    <property type="match status" value="1"/>
</dbReference>
<dbReference type="HAMAP" id="MF_03148">
    <property type="entry name" value="HAM1_NTPase"/>
    <property type="match status" value="1"/>
</dbReference>
<dbReference type="InterPro" id="IPR027502">
    <property type="entry name" value="ITPase"/>
</dbReference>
<dbReference type="InterPro" id="IPR029001">
    <property type="entry name" value="ITPase-like_fam"/>
</dbReference>
<dbReference type="InterPro" id="IPR002637">
    <property type="entry name" value="RdgB/HAM1"/>
</dbReference>
<dbReference type="NCBIfam" id="TIGR00042">
    <property type="entry name" value="RdgB/HAM1 family non-canonical purine NTP pyrophosphatase"/>
    <property type="match status" value="1"/>
</dbReference>
<dbReference type="PANTHER" id="PTHR11067:SF9">
    <property type="entry name" value="INOSINE TRIPHOSPHATE PYROPHOSPHATASE"/>
    <property type="match status" value="1"/>
</dbReference>
<dbReference type="PANTHER" id="PTHR11067">
    <property type="entry name" value="INOSINE TRIPHOSPHATE PYROPHOSPHATASE/HAM1 PROTEIN"/>
    <property type="match status" value="1"/>
</dbReference>
<dbReference type="Pfam" id="PF01725">
    <property type="entry name" value="Ham1p_like"/>
    <property type="match status" value="1"/>
</dbReference>
<dbReference type="SUPFAM" id="SSF52972">
    <property type="entry name" value="ITPase-like"/>
    <property type="match status" value="1"/>
</dbReference>
<keyword id="KW-0963">Cytoplasm</keyword>
<keyword id="KW-0378">Hydrolase</keyword>
<keyword id="KW-0460">Magnesium</keyword>
<keyword id="KW-0464">Manganese</keyword>
<keyword id="KW-0479">Metal-binding</keyword>
<keyword id="KW-0546">Nucleotide metabolism</keyword>
<keyword id="KW-0547">Nucleotide-binding</keyword>
<keyword id="KW-1185">Reference proteome</keyword>
<organism>
    <name type="scientific">Trypanosoma cruzi (strain CL Brener)</name>
    <dbReference type="NCBI Taxonomy" id="353153"/>
    <lineage>
        <taxon>Eukaryota</taxon>
        <taxon>Discoba</taxon>
        <taxon>Euglenozoa</taxon>
        <taxon>Kinetoplastea</taxon>
        <taxon>Metakinetoplastina</taxon>
        <taxon>Trypanosomatida</taxon>
        <taxon>Trypanosomatidae</taxon>
        <taxon>Trypanosoma</taxon>
        <taxon>Schizotrypanum</taxon>
    </lineage>
</organism>
<gene>
    <name type="ORF">Tc00.1047053508307.184</name>
</gene>
<comment type="function">
    <text evidence="1">Pyrophosphatase that hydrolyzes non-canonical purine nucleotides such as inosine triphosphate (ITP), deoxyinosine triphosphate (dITP) or xanthosine 5'-triphosphate (XTP) to their respective monophosphate derivatives. The enzyme does not distinguish between the deoxy- and ribose forms. Probably excludes non-canonical purines from RNA and DNA precursor pools, thus preventing their incorporation into RNA and DNA and avoiding chromosomal lesions.</text>
</comment>
<comment type="catalytic activity">
    <reaction evidence="1">
        <text>ITP + H2O = IMP + diphosphate + H(+)</text>
        <dbReference type="Rhea" id="RHEA:29399"/>
        <dbReference type="ChEBI" id="CHEBI:15377"/>
        <dbReference type="ChEBI" id="CHEBI:15378"/>
        <dbReference type="ChEBI" id="CHEBI:33019"/>
        <dbReference type="ChEBI" id="CHEBI:58053"/>
        <dbReference type="ChEBI" id="CHEBI:61402"/>
        <dbReference type="EC" id="3.6.1.66"/>
    </reaction>
    <physiologicalReaction direction="left-to-right" evidence="1">
        <dbReference type="Rhea" id="RHEA:29400"/>
    </physiologicalReaction>
</comment>
<comment type="catalytic activity">
    <reaction evidence="1">
        <text>dITP + H2O = dIMP + diphosphate + H(+)</text>
        <dbReference type="Rhea" id="RHEA:28342"/>
        <dbReference type="ChEBI" id="CHEBI:15377"/>
        <dbReference type="ChEBI" id="CHEBI:15378"/>
        <dbReference type="ChEBI" id="CHEBI:33019"/>
        <dbReference type="ChEBI" id="CHEBI:61194"/>
        <dbReference type="ChEBI" id="CHEBI:61382"/>
        <dbReference type="EC" id="3.6.1.66"/>
    </reaction>
    <physiologicalReaction direction="left-to-right" evidence="1">
        <dbReference type="Rhea" id="RHEA:28343"/>
    </physiologicalReaction>
</comment>
<comment type="catalytic activity">
    <reaction evidence="1">
        <text>XTP + H2O = XMP + diphosphate + H(+)</text>
        <dbReference type="Rhea" id="RHEA:28610"/>
        <dbReference type="ChEBI" id="CHEBI:15377"/>
        <dbReference type="ChEBI" id="CHEBI:15378"/>
        <dbReference type="ChEBI" id="CHEBI:33019"/>
        <dbReference type="ChEBI" id="CHEBI:57464"/>
        <dbReference type="ChEBI" id="CHEBI:61314"/>
        <dbReference type="EC" id="3.6.1.66"/>
    </reaction>
    <physiologicalReaction direction="left-to-right" evidence="1">
        <dbReference type="Rhea" id="RHEA:28611"/>
    </physiologicalReaction>
</comment>
<comment type="cofactor">
    <cofactor evidence="1">
        <name>Mg(2+)</name>
        <dbReference type="ChEBI" id="CHEBI:18420"/>
    </cofactor>
    <cofactor evidence="1">
        <name>Mn(2+)</name>
        <dbReference type="ChEBI" id="CHEBI:29035"/>
    </cofactor>
    <text evidence="1">Binds 1 divalent metal cation per subunit; can use either Mg(2+) or Mn(2+).</text>
</comment>
<comment type="subunit">
    <text evidence="1">Homodimer.</text>
</comment>
<comment type="subcellular location">
    <subcellularLocation>
        <location evidence="1">Cytoplasm</location>
    </subcellularLocation>
</comment>
<comment type="similarity">
    <text evidence="1">Belongs to the HAM1 NTPase family.</text>
</comment>
<sequence>MAEGSAVLRGSSNHKVTLVTGNDGKRREVQACLEGHVLVENVKLDLPEIQSDSVFEISRNKALTAYDIIKSPVLVEDTALCFDALGGLPGPYVKWFFERIGPTGLIKLLEGFDTRRAYATCVFTYCASPDVVLQFEGRCDGRIVEVPRGEGGFGWDSVFEPDEGCGQTYAEMQDEEKNRISPRAKALVALKAHFCL</sequence>
<feature type="chain" id="PRO_0000413124" description="Inosine triphosphate pyrophosphatase 2">
    <location>
        <begin position="1"/>
        <end position="196"/>
    </location>
</feature>
<feature type="binding site" evidence="1">
    <location>
        <begin position="20"/>
        <end position="25"/>
    </location>
    <ligand>
        <name>ITP</name>
        <dbReference type="ChEBI" id="CHEBI:61402"/>
    </ligand>
</feature>
<feature type="binding site" evidence="1">
    <location>
        <position position="48"/>
    </location>
    <ligand>
        <name>Mg(2+)</name>
        <dbReference type="ChEBI" id="CHEBI:18420"/>
    </ligand>
</feature>
<feature type="binding site" evidence="1">
    <location>
        <position position="61"/>
    </location>
    <ligand>
        <name>ITP</name>
        <dbReference type="ChEBI" id="CHEBI:61402"/>
    </ligand>
</feature>
<feature type="binding site" evidence="1">
    <location>
        <begin position="77"/>
        <end position="78"/>
    </location>
    <ligand>
        <name>ITP</name>
        <dbReference type="ChEBI" id="CHEBI:61402"/>
    </ligand>
</feature>
<feature type="binding site" evidence="1">
    <location>
        <position position="94"/>
    </location>
    <ligand>
        <name>ITP</name>
        <dbReference type="ChEBI" id="CHEBI:61402"/>
    </ligand>
</feature>
<feature type="binding site" evidence="1">
    <location>
        <begin position="153"/>
        <end position="156"/>
    </location>
    <ligand>
        <name>ITP</name>
        <dbReference type="ChEBI" id="CHEBI:61402"/>
    </ligand>
</feature>
<feature type="binding site" evidence="1">
    <location>
        <position position="177"/>
    </location>
    <ligand>
        <name>ITP</name>
        <dbReference type="ChEBI" id="CHEBI:61402"/>
    </ligand>
</feature>
<feature type="binding site" evidence="1">
    <location>
        <begin position="182"/>
        <end position="183"/>
    </location>
    <ligand>
        <name>ITP</name>
        <dbReference type="ChEBI" id="CHEBI:61402"/>
    </ligand>
</feature>
<evidence type="ECO:0000255" key="1">
    <source>
        <dbReference type="HAMAP-Rule" id="MF_03148"/>
    </source>
</evidence>
<reference key="1">
    <citation type="journal article" date="2005" name="Science">
        <title>The genome sequence of Trypanosoma cruzi, etiologic agent of Chagas disease.</title>
        <authorList>
            <person name="El-Sayed N.M.A."/>
            <person name="Myler P.J."/>
            <person name="Bartholomeu D.C."/>
            <person name="Nilsson D."/>
            <person name="Aggarwal G."/>
            <person name="Tran A.-N."/>
            <person name="Ghedin E."/>
            <person name="Worthey E.A."/>
            <person name="Delcher A.L."/>
            <person name="Blandin G."/>
            <person name="Westenberger S.J."/>
            <person name="Caler E."/>
            <person name="Cerqueira G.C."/>
            <person name="Branche C."/>
            <person name="Haas B."/>
            <person name="Anupama A."/>
            <person name="Arner E."/>
            <person name="Aslund L."/>
            <person name="Attipoe P."/>
            <person name="Bontempi E."/>
            <person name="Bringaud F."/>
            <person name="Burton P."/>
            <person name="Cadag E."/>
            <person name="Campbell D.A."/>
            <person name="Carrington M."/>
            <person name="Crabtree J."/>
            <person name="Darban H."/>
            <person name="da Silveira J.F."/>
            <person name="de Jong P."/>
            <person name="Edwards K."/>
            <person name="Englund P.T."/>
            <person name="Fazelina G."/>
            <person name="Feldblyum T."/>
            <person name="Ferella M."/>
            <person name="Frasch A.C."/>
            <person name="Gull K."/>
            <person name="Horn D."/>
            <person name="Hou L."/>
            <person name="Huang Y."/>
            <person name="Kindlund E."/>
            <person name="Klingbeil M."/>
            <person name="Kluge S."/>
            <person name="Koo H."/>
            <person name="Lacerda D."/>
            <person name="Levin M.J."/>
            <person name="Lorenzi H."/>
            <person name="Louie T."/>
            <person name="Machado C.R."/>
            <person name="McCulloch R."/>
            <person name="McKenna A."/>
            <person name="Mizuno Y."/>
            <person name="Mottram J.C."/>
            <person name="Nelson S."/>
            <person name="Ochaya S."/>
            <person name="Osoegawa K."/>
            <person name="Pai G."/>
            <person name="Parsons M."/>
            <person name="Pentony M."/>
            <person name="Pettersson U."/>
            <person name="Pop M."/>
            <person name="Ramirez J.L."/>
            <person name="Rinta J."/>
            <person name="Robertson L."/>
            <person name="Salzberg S.L."/>
            <person name="Sanchez D.O."/>
            <person name="Seyler A."/>
            <person name="Sharma R."/>
            <person name="Shetty J."/>
            <person name="Simpson A.J."/>
            <person name="Sisk E."/>
            <person name="Tammi M.T."/>
            <person name="Tarleton R."/>
            <person name="Teixeira S."/>
            <person name="Van Aken S."/>
            <person name="Vogt C."/>
            <person name="Ward P.N."/>
            <person name="Wickstead B."/>
            <person name="Wortman J."/>
            <person name="White O."/>
            <person name="Fraser C.M."/>
            <person name="Stuart K.D."/>
            <person name="Andersson B."/>
        </authorList>
    </citation>
    <scope>NUCLEOTIDE SEQUENCE [LARGE SCALE GENOMIC DNA]</scope>
    <source>
        <strain>CL Brener</strain>
    </source>
</reference>
<accession>Q4DRX4</accession>